<accession>A4VIG6</accession>
<feature type="chain" id="PRO_0000336235" description="UPF0102 protein PST_1070">
    <location>
        <begin position="1"/>
        <end position="120"/>
    </location>
</feature>
<protein>
    <recommendedName>
        <fullName evidence="1">UPF0102 protein PST_1070</fullName>
    </recommendedName>
</protein>
<sequence>MSESQSSGRSAEALALQHLSDSGLRLLERNWSCRSGELDLVMLDGDTVVFVEVRYRRHTAWGGALESVDVRKQQKLIKAAQLFLQAHGRWAKHPCRFDVVAITAPGQAKDLNWIRNAFES</sequence>
<reference key="1">
    <citation type="journal article" date="2008" name="Proc. Natl. Acad. Sci. U.S.A.">
        <title>Nitrogen fixation island and rhizosphere competence traits in the genome of root-associated Pseudomonas stutzeri A1501.</title>
        <authorList>
            <person name="Yan Y."/>
            <person name="Yang J."/>
            <person name="Dou Y."/>
            <person name="Chen M."/>
            <person name="Ping S."/>
            <person name="Peng J."/>
            <person name="Lu W."/>
            <person name="Zhang W."/>
            <person name="Yao Z."/>
            <person name="Li H."/>
            <person name="Liu W."/>
            <person name="He S."/>
            <person name="Geng L."/>
            <person name="Zhang X."/>
            <person name="Yang F."/>
            <person name="Yu H."/>
            <person name="Zhan Y."/>
            <person name="Li D."/>
            <person name="Lin Z."/>
            <person name="Wang Y."/>
            <person name="Elmerich C."/>
            <person name="Lin M."/>
            <person name="Jin Q."/>
        </authorList>
    </citation>
    <scope>NUCLEOTIDE SEQUENCE [LARGE SCALE GENOMIC DNA]</scope>
    <source>
        <strain>A1501</strain>
    </source>
</reference>
<dbReference type="EMBL" id="CP000304">
    <property type="protein sequence ID" value="ABP78767.1"/>
    <property type="molecule type" value="Genomic_DNA"/>
</dbReference>
<dbReference type="RefSeq" id="WP_011912257.1">
    <property type="nucleotide sequence ID" value="NC_009434.1"/>
</dbReference>
<dbReference type="SMR" id="A4VIG6"/>
<dbReference type="KEGG" id="psa:PST_1070"/>
<dbReference type="eggNOG" id="COG0792">
    <property type="taxonomic scope" value="Bacteria"/>
</dbReference>
<dbReference type="HOGENOM" id="CLU_115353_1_0_6"/>
<dbReference type="Proteomes" id="UP000000233">
    <property type="component" value="Chromosome"/>
</dbReference>
<dbReference type="GO" id="GO:0003676">
    <property type="term" value="F:nucleic acid binding"/>
    <property type="evidence" value="ECO:0007669"/>
    <property type="project" value="InterPro"/>
</dbReference>
<dbReference type="CDD" id="cd20736">
    <property type="entry name" value="PoNe_Nuclease"/>
    <property type="match status" value="1"/>
</dbReference>
<dbReference type="Gene3D" id="3.40.1350.10">
    <property type="match status" value="1"/>
</dbReference>
<dbReference type="HAMAP" id="MF_00048">
    <property type="entry name" value="UPF0102"/>
    <property type="match status" value="1"/>
</dbReference>
<dbReference type="InterPro" id="IPR011335">
    <property type="entry name" value="Restrct_endonuc-II-like"/>
</dbReference>
<dbReference type="InterPro" id="IPR011856">
    <property type="entry name" value="tRNA_endonuc-like_dom_sf"/>
</dbReference>
<dbReference type="InterPro" id="IPR003509">
    <property type="entry name" value="UPF0102_YraN-like"/>
</dbReference>
<dbReference type="NCBIfam" id="NF009150">
    <property type="entry name" value="PRK12497.1-3"/>
    <property type="match status" value="1"/>
</dbReference>
<dbReference type="NCBIfam" id="NF009154">
    <property type="entry name" value="PRK12497.3-3"/>
    <property type="match status" value="1"/>
</dbReference>
<dbReference type="NCBIfam" id="TIGR00252">
    <property type="entry name" value="YraN family protein"/>
    <property type="match status" value="1"/>
</dbReference>
<dbReference type="PANTHER" id="PTHR34039">
    <property type="entry name" value="UPF0102 PROTEIN YRAN"/>
    <property type="match status" value="1"/>
</dbReference>
<dbReference type="PANTHER" id="PTHR34039:SF1">
    <property type="entry name" value="UPF0102 PROTEIN YRAN"/>
    <property type="match status" value="1"/>
</dbReference>
<dbReference type="Pfam" id="PF02021">
    <property type="entry name" value="UPF0102"/>
    <property type="match status" value="1"/>
</dbReference>
<dbReference type="SUPFAM" id="SSF52980">
    <property type="entry name" value="Restriction endonuclease-like"/>
    <property type="match status" value="1"/>
</dbReference>
<proteinExistence type="inferred from homology"/>
<name>Y1070_STUS1</name>
<comment type="similarity">
    <text evidence="1">Belongs to the UPF0102 family.</text>
</comment>
<evidence type="ECO:0000255" key="1">
    <source>
        <dbReference type="HAMAP-Rule" id="MF_00048"/>
    </source>
</evidence>
<gene>
    <name type="ordered locus">PST_1070</name>
</gene>
<keyword id="KW-1185">Reference proteome</keyword>
<organism>
    <name type="scientific">Stutzerimonas stutzeri (strain A1501)</name>
    <name type="common">Pseudomonas stutzeri</name>
    <dbReference type="NCBI Taxonomy" id="379731"/>
    <lineage>
        <taxon>Bacteria</taxon>
        <taxon>Pseudomonadati</taxon>
        <taxon>Pseudomonadota</taxon>
        <taxon>Gammaproteobacteria</taxon>
        <taxon>Pseudomonadales</taxon>
        <taxon>Pseudomonadaceae</taxon>
        <taxon>Stutzerimonas</taxon>
    </lineage>
</organism>